<name>RS181_MYCMM</name>
<proteinExistence type="inferred from homology"/>
<dbReference type="EMBL" id="CP000854">
    <property type="protein sequence ID" value="ACC38545.1"/>
    <property type="molecule type" value="Genomic_DNA"/>
</dbReference>
<dbReference type="RefSeq" id="WP_011738471.1">
    <property type="nucleotide sequence ID" value="NC_010612.1"/>
</dbReference>
<dbReference type="SMR" id="B2HIB9"/>
<dbReference type="STRING" id="216594.MMAR_0074"/>
<dbReference type="GeneID" id="34343701"/>
<dbReference type="KEGG" id="mmi:MMAR_0074"/>
<dbReference type="eggNOG" id="COG0238">
    <property type="taxonomic scope" value="Bacteria"/>
</dbReference>
<dbReference type="HOGENOM" id="CLU_148710_2_2_11"/>
<dbReference type="OrthoDB" id="9812008at2"/>
<dbReference type="Proteomes" id="UP000001190">
    <property type="component" value="Chromosome"/>
</dbReference>
<dbReference type="GO" id="GO:0022627">
    <property type="term" value="C:cytosolic small ribosomal subunit"/>
    <property type="evidence" value="ECO:0007669"/>
    <property type="project" value="TreeGrafter"/>
</dbReference>
<dbReference type="GO" id="GO:0070181">
    <property type="term" value="F:small ribosomal subunit rRNA binding"/>
    <property type="evidence" value="ECO:0007669"/>
    <property type="project" value="TreeGrafter"/>
</dbReference>
<dbReference type="GO" id="GO:0003735">
    <property type="term" value="F:structural constituent of ribosome"/>
    <property type="evidence" value="ECO:0007669"/>
    <property type="project" value="InterPro"/>
</dbReference>
<dbReference type="GO" id="GO:0006412">
    <property type="term" value="P:translation"/>
    <property type="evidence" value="ECO:0007669"/>
    <property type="project" value="UniProtKB-UniRule"/>
</dbReference>
<dbReference type="FunFam" id="4.10.640.10:FF:000004">
    <property type="entry name" value="30S ribosomal protein S18"/>
    <property type="match status" value="1"/>
</dbReference>
<dbReference type="Gene3D" id="4.10.640.10">
    <property type="entry name" value="Ribosomal protein S18"/>
    <property type="match status" value="1"/>
</dbReference>
<dbReference type="HAMAP" id="MF_00270">
    <property type="entry name" value="Ribosomal_bS18"/>
    <property type="match status" value="1"/>
</dbReference>
<dbReference type="InterPro" id="IPR001648">
    <property type="entry name" value="Ribosomal_bS18"/>
</dbReference>
<dbReference type="InterPro" id="IPR018275">
    <property type="entry name" value="Ribosomal_bS18_CS"/>
</dbReference>
<dbReference type="InterPro" id="IPR036870">
    <property type="entry name" value="Ribosomal_bS18_sf"/>
</dbReference>
<dbReference type="NCBIfam" id="TIGR00165">
    <property type="entry name" value="S18"/>
    <property type="match status" value="1"/>
</dbReference>
<dbReference type="PANTHER" id="PTHR13479">
    <property type="entry name" value="30S RIBOSOMAL PROTEIN S18"/>
    <property type="match status" value="1"/>
</dbReference>
<dbReference type="PANTHER" id="PTHR13479:SF62">
    <property type="entry name" value="SMALL RIBOSOMAL SUBUNIT PROTEIN BS18A"/>
    <property type="match status" value="1"/>
</dbReference>
<dbReference type="Pfam" id="PF01084">
    <property type="entry name" value="Ribosomal_S18"/>
    <property type="match status" value="1"/>
</dbReference>
<dbReference type="PRINTS" id="PR00974">
    <property type="entry name" value="RIBOSOMALS18"/>
</dbReference>
<dbReference type="SUPFAM" id="SSF46911">
    <property type="entry name" value="Ribosomal protein S18"/>
    <property type="match status" value="1"/>
</dbReference>
<dbReference type="PROSITE" id="PS00057">
    <property type="entry name" value="RIBOSOMAL_S18"/>
    <property type="match status" value="1"/>
</dbReference>
<protein>
    <recommendedName>
        <fullName evidence="1">Small ribosomal subunit protein bS18A</fullName>
    </recommendedName>
    <alternativeName>
        <fullName evidence="2">30S ribosomal protein S18 1</fullName>
    </alternativeName>
</protein>
<accession>B2HIB9</accession>
<keyword id="KW-1185">Reference proteome</keyword>
<keyword id="KW-0687">Ribonucleoprotein</keyword>
<keyword id="KW-0689">Ribosomal protein</keyword>
<keyword id="KW-0694">RNA-binding</keyword>
<keyword id="KW-0699">rRNA-binding</keyword>
<comment type="function">
    <text evidence="1">Binds as a heterodimer with protein bS6 to the central domain of the 16S rRNA, where it helps stabilize the platform of the 30S subunit.</text>
</comment>
<comment type="subunit">
    <text evidence="1">Part of the 30S ribosomal subunit. Forms a tight heterodimer with protein bS6.</text>
</comment>
<comment type="similarity">
    <text evidence="1">Belongs to the bacterial ribosomal protein bS18 family.</text>
</comment>
<evidence type="ECO:0000255" key="1">
    <source>
        <dbReference type="HAMAP-Rule" id="MF_00270"/>
    </source>
</evidence>
<evidence type="ECO:0000305" key="2"/>
<feature type="chain" id="PRO_0000345502" description="Small ribosomal subunit protein bS18A">
    <location>
        <begin position="1"/>
        <end position="84"/>
    </location>
</feature>
<reference key="1">
    <citation type="journal article" date="2008" name="Genome Res.">
        <title>Insights from the complete genome sequence of Mycobacterium marinum on the evolution of Mycobacterium tuberculosis.</title>
        <authorList>
            <person name="Stinear T.P."/>
            <person name="Seemann T."/>
            <person name="Harrison P.F."/>
            <person name="Jenkin G.A."/>
            <person name="Davies J.K."/>
            <person name="Johnson P.D."/>
            <person name="Abdellah Z."/>
            <person name="Arrowsmith C."/>
            <person name="Chillingworth T."/>
            <person name="Churcher C."/>
            <person name="Clarke K."/>
            <person name="Cronin A."/>
            <person name="Davis P."/>
            <person name="Goodhead I."/>
            <person name="Holroyd N."/>
            <person name="Jagels K."/>
            <person name="Lord A."/>
            <person name="Moule S."/>
            <person name="Mungall K."/>
            <person name="Norbertczak H."/>
            <person name="Quail M.A."/>
            <person name="Rabbinowitsch E."/>
            <person name="Walker D."/>
            <person name="White B."/>
            <person name="Whitehead S."/>
            <person name="Small P.L."/>
            <person name="Brosch R."/>
            <person name="Ramakrishnan L."/>
            <person name="Fischbach M.A."/>
            <person name="Parkhill J."/>
            <person name="Cole S.T."/>
        </authorList>
    </citation>
    <scope>NUCLEOTIDE SEQUENCE [LARGE SCALE GENOMIC DNA]</scope>
    <source>
        <strain>ATCC BAA-535 / M</strain>
    </source>
</reference>
<sequence length="84" mass="9542">MAKSNKRRPAPEKPVKTRKCVFCAKKDQAIDYKDTALLRTYISERGKIRARRVTGNCVQHQRDIALAVKNAREVALLPFTSSAR</sequence>
<organism>
    <name type="scientific">Mycobacterium marinum (strain ATCC BAA-535 / M)</name>
    <dbReference type="NCBI Taxonomy" id="216594"/>
    <lineage>
        <taxon>Bacteria</taxon>
        <taxon>Bacillati</taxon>
        <taxon>Actinomycetota</taxon>
        <taxon>Actinomycetes</taxon>
        <taxon>Mycobacteriales</taxon>
        <taxon>Mycobacteriaceae</taxon>
        <taxon>Mycobacterium</taxon>
        <taxon>Mycobacterium ulcerans group</taxon>
    </lineage>
</organism>
<gene>
    <name evidence="1" type="primary">rpsR1</name>
    <name type="ordered locus">MMAR_0074</name>
</gene>